<gene>
    <name evidence="1" type="primary">mdtC</name>
    <name type="ordered locus">EFER_2163</name>
</gene>
<proteinExistence type="evidence at transcript level"/>
<protein>
    <recommendedName>
        <fullName evidence="1">Multidrug resistance protein MdtC</fullName>
    </recommendedName>
    <alternativeName>
        <fullName evidence="1">Multidrug transporter MdtC</fullName>
    </alternativeName>
</protein>
<reference key="1">
    <citation type="journal article" date="2009" name="PLoS Genet.">
        <title>Organised genome dynamics in the Escherichia coli species results in highly diverse adaptive paths.</title>
        <authorList>
            <person name="Touchon M."/>
            <person name="Hoede C."/>
            <person name="Tenaillon O."/>
            <person name="Barbe V."/>
            <person name="Baeriswyl S."/>
            <person name="Bidet P."/>
            <person name="Bingen E."/>
            <person name="Bonacorsi S."/>
            <person name="Bouchier C."/>
            <person name="Bouvet O."/>
            <person name="Calteau A."/>
            <person name="Chiapello H."/>
            <person name="Clermont O."/>
            <person name="Cruveiller S."/>
            <person name="Danchin A."/>
            <person name="Diard M."/>
            <person name="Dossat C."/>
            <person name="Karoui M.E."/>
            <person name="Frapy E."/>
            <person name="Garry L."/>
            <person name="Ghigo J.M."/>
            <person name="Gilles A.M."/>
            <person name="Johnson J."/>
            <person name="Le Bouguenec C."/>
            <person name="Lescat M."/>
            <person name="Mangenot S."/>
            <person name="Martinez-Jehanne V."/>
            <person name="Matic I."/>
            <person name="Nassif X."/>
            <person name="Oztas S."/>
            <person name="Petit M.A."/>
            <person name="Pichon C."/>
            <person name="Rouy Z."/>
            <person name="Ruf C.S."/>
            <person name="Schneider D."/>
            <person name="Tourret J."/>
            <person name="Vacherie B."/>
            <person name="Vallenet D."/>
            <person name="Medigue C."/>
            <person name="Rocha E.P.C."/>
            <person name="Denamur E."/>
        </authorList>
    </citation>
    <scope>NUCLEOTIDE SEQUENCE [LARGE SCALE GENOMIC DNA]</scope>
    <source>
        <strain>ATCC 35469 / DSM 13698 / BCRC 15582 / CCUG 18766 / IAM 14443 / JCM 21226 / LMG 7866 / NBRC 102419 / NCTC 12128 / CDC 0568-73</strain>
    </source>
</reference>
<name>MDTC_ESCF3</name>
<sequence length="1025" mass="111026">MKFFALFIYRPVATILLSVAITLCGILGFRMLPVAPLPQVDFPVIMVSASLPGASPETMASSVATPLERSLGRIAGVSEMTSSSSLGSTRIILQFDFDRDINGAARDVQAAINAAQSLLPSGMPSRPTYRKANPSDAPIMILTLTSDTYSQGELYDFASTQLAPTISQIDGVGDVDVGGSSLPAVRVGLNPQALFNQGVSLDDVRTAISNANVRKPQGALEDGTHRWQIQTNDELKTAAEYQPLIIHYNNGGAVRLGDVATVTDSVQDVRNAGMTNAKPAILLMIRKLPEANIIQTVDSIRAKLPELQETIPAAIDLQIAQDRSPTIRASLEEVEQTLIISVALVILVVFLFLRSGRATIIPAVAVPVSLIGTFAAMYLCGFSLNNLSLMALTIATGFVVDDAIVVLENIARHLEAGMKPLQAALQGTREVGFTVLSMSLSLVAVFLPLLLMGGLPGRLLREFAVTLSVAIGISLLVSLTLTPMMCGWMLKASKPREQKRLRGFGRMLVALQQGYGKSLKWVLNHTRLVGVVLLGTIALNIWLYISIPKTFFPEQDTGVLMGGIQADQSISFQAMRGKLQDFMKIIRDDPAVDNVTGFTGGSRVNSGMMFITLKPRDERSETAQQIIDRLRVKLAKEPGANLFLMAVQDIRVGGRQSNASYQYTLLSDDLAALREWEPKIRKKLATLPELADVNSDQQDNGAEMNLVYDRDTMARLGIDVQAANSLLNNAFGQRQISTIYQPMNQYKVVMEVDPRYTQDISALEKMFVINNEGKAIPLSYFAKWQPANAPLSVNHQGLSAASTISFNLPTGKSLSDASAAIDRAMTQLGVPSTVRGSFAGTAQVFQETMNSQVILIIAAIATVYIVLGILYESYVHPLTILSTLPSAGVGALLALELFNAPFSLIALIGIMLLIGIVKKNAIMMVDFALEAQRHGNLTPQEAIFQACLLRFRPIMMTTLAALFGALPLVLSGGDGSELRQPLGITIVGGLVMSQLLTLYTTPVVYLFFDRLRLRFSRKPKQTVTE</sequence>
<evidence type="ECO:0000255" key="1">
    <source>
        <dbReference type="HAMAP-Rule" id="MF_01424"/>
    </source>
</evidence>
<feature type="chain" id="PRO_1000145675" description="Multidrug resistance protein MdtC">
    <location>
        <begin position="1"/>
        <end position="1025"/>
    </location>
</feature>
<feature type="transmembrane region" description="Helical" evidence="1">
    <location>
        <begin position="3"/>
        <end position="23"/>
    </location>
</feature>
<feature type="transmembrane region" description="Helical" evidence="1">
    <location>
        <begin position="333"/>
        <end position="353"/>
    </location>
</feature>
<feature type="transmembrane region" description="Helical" evidence="1">
    <location>
        <begin position="360"/>
        <end position="380"/>
    </location>
</feature>
<feature type="transmembrane region" description="Helical" evidence="1">
    <location>
        <begin position="387"/>
        <end position="407"/>
    </location>
</feature>
<feature type="transmembrane region" description="Helical" evidence="1">
    <location>
        <begin position="431"/>
        <end position="451"/>
    </location>
</feature>
<feature type="transmembrane region" description="Helical" evidence="1">
    <location>
        <begin position="463"/>
        <end position="483"/>
    </location>
</feature>
<feature type="transmembrane region" description="Helical" evidence="1">
    <location>
        <begin position="528"/>
        <end position="548"/>
    </location>
</feature>
<feature type="transmembrane region" description="Helical" evidence="1">
    <location>
        <begin position="853"/>
        <end position="873"/>
    </location>
</feature>
<feature type="transmembrane region" description="Helical" evidence="1">
    <location>
        <begin position="875"/>
        <end position="895"/>
    </location>
</feature>
<feature type="transmembrane region" description="Helical" evidence="1">
    <location>
        <begin position="897"/>
        <end position="917"/>
    </location>
</feature>
<feature type="transmembrane region" description="Helical" evidence="1">
    <location>
        <begin position="953"/>
        <end position="973"/>
    </location>
</feature>
<feature type="transmembrane region" description="Helical" evidence="1">
    <location>
        <begin position="984"/>
        <end position="1004"/>
    </location>
</feature>
<organism>
    <name type="scientific">Escherichia fergusonii (strain ATCC 35469 / DSM 13698 / CCUG 18766 / IAM 14443 / JCM 21226 / LMG 7866 / NBRC 102419 / NCTC 12128 / CDC 0568-73)</name>
    <dbReference type="NCBI Taxonomy" id="585054"/>
    <lineage>
        <taxon>Bacteria</taxon>
        <taxon>Pseudomonadati</taxon>
        <taxon>Pseudomonadota</taxon>
        <taxon>Gammaproteobacteria</taxon>
        <taxon>Enterobacterales</taxon>
        <taxon>Enterobacteriaceae</taxon>
        <taxon>Escherichia</taxon>
    </lineage>
</organism>
<keyword id="KW-0997">Cell inner membrane</keyword>
<keyword id="KW-1003">Cell membrane</keyword>
<keyword id="KW-0472">Membrane</keyword>
<keyword id="KW-0812">Transmembrane</keyword>
<keyword id="KW-1133">Transmembrane helix</keyword>
<keyword id="KW-0813">Transport</keyword>
<accession>B7LV40</accession>
<comment type="function">
    <text evidence="1">The MdtABC tripartite complex confers resistance against novobiocin and deoxycholate.</text>
</comment>
<comment type="subunit">
    <text evidence="1">Part of a tripartite efflux system composed of MdtA, MdtB and MdtC. MdtC forms a heteromultimer with MdtB.</text>
</comment>
<comment type="subcellular location">
    <subcellularLocation>
        <location evidence="1">Cell inner membrane</location>
        <topology evidence="1">Multi-pass membrane protein</topology>
    </subcellularLocation>
</comment>
<comment type="induction">
    <text>The mdtABC operon is transcriptionally activated by BaeR.</text>
</comment>
<comment type="similarity">
    <text evidence="1">Belongs to the resistance-nodulation-cell division (RND) (TC 2.A.6) family. MdtC subfamily.</text>
</comment>
<dbReference type="EMBL" id="CU928158">
    <property type="protein sequence ID" value="CAQ89666.1"/>
    <property type="molecule type" value="Genomic_DNA"/>
</dbReference>
<dbReference type="RefSeq" id="WP_000667531.1">
    <property type="nucleotide sequence ID" value="NC_011740.1"/>
</dbReference>
<dbReference type="SMR" id="B7LV40"/>
<dbReference type="GeneID" id="75056801"/>
<dbReference type="KEGG" id="efe:EFER_2163"/>
<dbReference type="HOGENOM" id="CLU_002755_1_2_6"/>
<dbReference type="OrthoDB" id="9757904at2"/>
<dbReference type="Proteomes" id="UP000000745">
    <property type="component" value="Chromosome"/>
</dbReference>
<dbReference type="GO" id="GO:0005886">
    <property type="term" value="C:plasma membrane"/>
    <property type="evidence" value="ECO:0007669"/>
    <property type="project" value="UniProtKB-SubCell"/>
</dbReference>
<dbReference type="GO" id="GO:0042910">
    <property type="term" value="F:xenobiotic transmembrane transporter activity"/>
    <property type="evidence" value="ECO:0007669"/>
    <property type="project" value="TreeGrafter"/>
</dbReference>
<dbReference type="FunFam" id="1.20.1640.10:FF:000001">
    <property type="entry name" value="Efflux pump membrane transporter"/>
    <property type="match status" value="1"/>
</dbReference>
<dbReference type="FunFam" id="3.30.70.1430:FF:000001">
    <property type="entry name" value="Efflux pump membrane transporter"/>
    <property type="match status" value="1"/>
</dbReference>
<dbReference type="FunFam" id="3.30.2090.10:FF:000004">
    <property type="entry name" value="Multidrug resistance protein MdtC"/>
    <property type="match status" value="1"/>
</dbReference>
<dbReference type="FunFam" id="3.30.2090.10:FF:000005">
    <property type="entry name" value="Multidrug resistance protein MdtC"/>
    <property type="match status" value="1"/>
</dbReference>
<dbReference type="FunFam" id="3.30.70.1430:FF:000004">
    <property type="entry name" value="Multidrug resistance protein MdtC"/>
    <property type="match status" value="1"/>
</dbReference>
<dbReference type="Gene3D" id="3.30.70.1430">
    <property type="entry name" value="Multidrug efflux transporter AcrB pore domain"/>
    <property type="match status" value="2"/>
</dbReference>
<dbReference type="Gene3D" id="3.30.70.1440">
    <property type="entry name" value="Multidrug efflux transporter AcrB pore domain"/>
    <property type="match status" value="1"/>
</dbReference>
<dbReference type="Gene3D" id="3.30.70.1320">
    <property type="entry name" value="Multidrug efflux transporter AcrB pore domain like"/>
    <property type="match status" value="1"/>
</dbReference>
<dbReference type="Gene3D" id="3.30.2090.10">
    <property type="entry name" value="Multidrug efflux transporter AcrB TolC docking domain, DN and DC subdomains"/>
    <property type="match status" value="2"/>
</dbReference>
<dbReference type="Gene3D" id="1.20.1640.10">
    <property type="entry name" value="Multidrug efflux transporter AcrB transmembrane domain"/>
    <property type="match status" value="2"/>
</dbReference>
<dbReference type="HAMAP" id="MF_01424">
    <property type="entry name" value="MdtC"/>
    <property type="match status" value="1"/>
</dbReference>
<dbReference type="InterPro" id="IPR027463">
    <property type="entry name" value="AcrB_DN_DC_subdom"/>
</dbReference>
<dbReference type="InterPro" id="IPR001036">
    <property type="entry name" value="Acrflvin-R"/>
</dbReference>
<dbReference type="InterPro" id="IPR023931">
    <property type="entry name" value="Multidrug-R_MdtC"/>
</dbReference>
<dbReference type="NCBIfam" id="NF007905">
    <property type="entry name" value="PRK10614.1"/>
    <property type="match status" value="1"/>
</dbReference>
<dbReference type="NCBIfam" id="NF033617">
    <property type="entry name" value="RND_permease_2"/>
    <property type="match status" value="1"/>
</dbReference>
<dbReference type="PANTHER" id="PTHR32063">
    <property type="match status" value="1"/>
</dbReference>
<dbReference type="PANTHER" id="PTHR32063:SF34">
    <property type="entry name" value="MULTIDRUG RESISTANCE PROTEIN MDTC"/>
    <property type="match status" value="1"/>
</dbReference>
<dbReference type="Pfam" id="PF00873">
    <property type="entry name" value="ACR_tran"/>
    <property type="match status" value="1"/>
</dbReference>
<dbReference type="PRINTS" id="PR00702">
    <property type="entry name" value="ACRIFLAVINRP"/>
</dbReference>
<dbReference type="SUPFAM" id="SSF82693">
    <property type="entry name" value="Multidrug efflux transporter AcrB pore domain, PN1, PN2, PC1 and PC2 subdomains"/>
    <property type="match status" value="4"/>
</dbReference>
<dbReference type="SUPFAM" id="SSF82714">
    <property type="entry name" value="Multidrug efflux transporter AcrB TolC docking domain, DN and DC subdomains"/>
    <property type="match status" value="2"/>
</dbReference>
<dbReference type="SUPFAM" id="SSF82866">
    <property type="entry name" value="Multidrug efflux transporter AcrB transmembrane domain"/>
    <property type="match status" value="2"/>
</dbReference>